<reference key="1">
    <citation type="journal article" date="2001" name="J. Biol. Chem.">
        <title>Hepcidin: a urinary antimicrobial peptide synthesized in the liver.</title>
        <authorList>
            <person name="Park C.H."/>
            <person name="Valore E.V."/>
            <person name="Waring A.J."/>
            <person name="Ganz T."/>
        </authorList>
    </citation>
    <scope>NUCLEOTIDE SEQUENCE [MRNA]</scope>
    <scope>PROTEIN SEQUENCE OF 60-84</scope>
    <source>
        <tissue>Liver</tissue>
        <tissue>Urine</tissue>
    </source>
</reference>
<reference key="2">
    <citation type="journal article" date="2000" name="FEBS Lett.">
        <title>LEAP-1, a novel highly disulfide-bonded human peptide exhibits antimicrobial activity.</title>
        <authorList>
            <person name="Krause A."/>
            <person name="Neitz S."/>
            <person name="Maegert H.-J."/>
            <person name="Schulz A."/>
            <person name="Forssmann W.-G."/>
            <person name="Schulz-Knappe P."/>
            <person name="Adermann K."/>
        </authorList>
    </citation>
    <scope>NUCLEOTIDE SEQUENCE [MRNA]</scope>
    <scope>PROTEIN SEQUENCE OF 60-84</scope>
    <scope>TISSUE SPECIFICITY</scope>
    <scope>MASS SPECTROMETRY</scope>
    <scope>SUBCELLULAR LOCATION</scope>
    <source>
        <tissue>Blood</tissue>
        <tissue>Liver</tissue>
    </source>
</reference>
<reference key="3">
    <citation type="submission" date="1999-02" db="EMBL/GenBank/DDBJ databases">
        <authorList>
            <person name="Jung J.-W."/>
            <person name="Shin W.-S."/>
            <person name="Yoon Y."/>
            <person name="Lee S.-T."/>
        </authorList>
    </citation>
    <scope>NUCLEOTIDE SEQUENCE [MRNA]</scope>
</reference>
<reference key="4">
    <citation type="journal article" date="2003" name="Genome Res.">
        <title>The secreted protein discovery initiative (SPDI), a large-scale effort to identify novel human secreted and transmembrane proteins: a bioinformatics assessment.</title>
        <authorList>
            <person name="Clark H.F."/>
            <person name="Gurney A.L."/>
            <person name="Abaya E."/>
            <person name="Baker K."/>
            <person name="Baldwin D.T."/>
            <person name="Brush J."/>
            <person name="Chen J."/>
            <person name="Chow B."/>
            <person name="Chui C."/>
            <person name="Crowley C."/>
            <person name="Currell B."/>
            <person name="Deuel B."/>
            <person name="Dowd P."/>
            <person name="Eaton D."/>
            <person name="Foster J.S."/>
            <person name="Grimaldi C."/>
            <person name="Gu Q."/>
            <person name="Hass P.E."/>
            <person name="Heldens S."/>
            <person name="Huang A."/>
            <person name="Kim H.S."/>
            <person name="Klimowski L."/>
            <person name="Jin Y."/>
            <person name="Johnson S."/>
            <person name="Lee J."/>
            <person name="Lewis L."/>
            <person name="Liao D."/>
            <person name="Mark M.R."/>
            <person name="Robbie E."/>
            <person name="Sanchez C."/>
            <person name="Schoenfeld J."/>
            <person name="Seshagiri S."/>
            <person name="Simmons L."/>
            <person name="Singh J."/>
            <person name="Smith V."/>
            <person name="Stinson J."/>
            <person name="Vagts A."/>
            <person name="Vandlen R.L."/>
            <person name="Watanabe C."/>
            <person name="Wieand D."/>
            <person name="Woods K."/>
            <person name="Xie M.-H."/>
            <person name="Yansura D.G."/>
            <person name="Yi S."/>
            <person name="Yu G."/>
            <person name="Yuan J."/>
            <person name="Zhang M."/>
            <person name="Zhang Z."/>
            <person name="Goddard A.D."/>
            <person name="Wood W.I."/>
            <person name="Godowski P.J."/>
            <person name="Gray A.M."/>
        </authorList>
    </citation>
    <scope>NUCLEOTIDE SEQUENCE [LARGE SCALE MRNA]</scope>
</reference>
<reference key="5">
    <citation type="submission" date="2006-04" db="EMBL/GenBank/DDBJ databases">
        <authorList>
            <consortium name="NHLBI resequencing and genotyping service (RS&amp;G)"/>
        </authorList>
    </citation>
    <scope>NUCLEOTIDE SEQUENCE [GENOMIC DNA]</scope>
</reference>
<reference key="6">
    <citation type="journal article" date="2004" name="Nature">
        <title>The DNA sequence and biology of human chromosome 19.</title>
        <authorList>
            <person name="Grimwood J."/>
            <person name="Gordon L.A."/>
            <person name="Olsen A.S."/>
            <person name="Terry A."/>
            <person name="Schmutz J."/>
            <person name="Lamerdin J.E."/>
            <person name="Hellsten U."/>
            <person name="Goodstein D."/>
            <person name="Couronne O."/>
            <person name="Tran-Gyamfi M."/>
            <person name="Aerts A."/>
            <person name="Altherr M."/>
            <person name="Ashworth L."/>
            <person name="Bajorek E."/>
            <person name="Black S."/>
            <person name="Branscomb E."/>
            <person name="Caenepeel S."/>
            <person name="Carrano A.V."/>
            <person name="Caoile C."/>
            <person name="Chan Y.M."/>
            <person name="Christensen M."/>
            <person name="Cleland C.A."/>
            <person name="Copeland A."/>
            <person name="Dalin E."/>
            <person name="Dehal P."/>
            <person name="Denys M."/>
            <person name="Detter J.C."/>
            <person name="Escobar J."/>
            <person name="Flowers D."/>
            <person name="Fotopulos D."/>
            <person name="Garcia C."/>
            <person name="Georgescu A.M."/>
            <person name="Glavina T."/>
            <person name="Gomez M."/>
            <person name="Gonzales E."/>
            <person name="Groza M."/>
            <person name="Hammon N."/>
            <person name="Hawkins T."/>
            <person name="Haydu L."/>
            <person name="Ho I."/>
            <person name="Huang W."/>
            <person name="Israni S."/>
            <person name="Jett J."/>
            <person name="Kadner K."/>
            <person name="Kimball H."/>
            <person name="Kobayashi A."/>
            <person name="Larionov V."/>
            <person name="Leem S.-H."/>
            <person name="Lopez F."/>
            <person name="Lou Y."/>
            <person name="Lowry S."/>
            <person name="Malfatti S."/>
            <person name="Martinez D."/>
            <person name="McCready P.M."/>
            <person name="Medina C."/>
            <person name="Morgan J."/>
            <person name="Nelson K."/>
            <person name="Nolan M."/>
            <person name="Ovcharenko I."/>
            <person name="Pitluck S."/>
            <person name="Pollard M."/>
            <person name="Popkie A.P."/>
            <person name="Predki P."/>
            <person name="Quan G."/>
            <person name="Ramirez L."/>
            <person name="Rash S."/>
            <person name="Retterer J."/>
            <person name="Rodriguez A."/>
            <person name="Rogers S."/>
            <person name="Salamov A."/>
            <person name="Salazar A."/>
            <person name="She X."/>
            <person name="Smith D."/>
            <person name="Slezak T."/>
            <person name="Solovyev V."/>
            <person name="Thayer N."/>
            <person name="Tice H."/>
            <person name="Tsai M."/>
            <person name="Ustaszewska A."/>
            <person name="Vo N."/>
            <person name="Wagner M."/>
            <person name="Wheeler J."/>
            <person name="Wu K."/>
            <person name="Xie G."/>
            <person name="Yang J."/>
            <person name="Dubchak I."/>
            <person name="Furey T.S."/>
            <person name="DeJong P."/>
            <person name="Dickson M."/>
            <person name="Gordon D."/>
            <person name="Eichler E.E."/>
            <person name="Pennacchio L.A."/>
            <person name="Richardson P."/>
            <person name="Stubbs L."/>
            <person name="Rokhsar D.S."/>
            <person name="Myers R.M."/>
            <person name="Rubin E.M."/>
            <person name="Lucas S.M."/>
        </authorList>
    </citation>
    <scope>NUCLEOTIDE SEQUENCE [LARGE SCALE GENOMIC DNA]</scope>
</reference>
<reference key="7">
    <citation type="journal article" date="2004" name="Genome Res.">
        <title>The status, quality, and expansion of the NIH full-length cDNA project: the Mammalian Gene Collection (MGC).</title>
        <authorList>
            <consortium name="The MGC Project Team"/>
        </authorList>
    </citation>
    <scope>NUCLEOTIDE SEQUENCE [LARGE SCALE MRNA]</scope>
    <source>
        <tissue>Liver</tissue>
    </source>
</reference>
<reference key="8">
    <citation type="journal article" date="2002" name="J. Pept. Res.">
        <title>Chemical synthesis of beta-defensins and LEAP-1/hepcidin.</title>
        <authorList>
            <person name="Kluever E."/>
            <person name="Schulz A."/>
            <person name="Forssmann W.-G."/>
            <person name="Adermann K."/>
        </authorList>
    </citation>
    <scope>SYNTHESIS OF 60-84</scope>
</reference>
<reference key="9">
    <citation type="journal article" date="2004" name="J. Clin. Invest.">
        <title>IL-6 mediates hypoferremia of inflammation by inducing the synthesis of the iron regulatory hormone hepcidin.</title>
        <authorList>
            <person name="Nemeth E."/>
            <person name="Rivera S."/>
            <person name="Gabayan V."/>
            <person name="Keller C."/>
            <person name="Taudorf S."/>
            <person name="Pedersen B.K."/>
            <person name="Ganz T."/>
        </authorList>
    </citation>
    <scope>INDUCTION BY LPS</scope>
    <scope>TISSUE SPECIFICITY</scope>
</reference>
<reference key="10">
    <citation type="journal article" date="2012" name="Biochim. Biophys. Acta">
        <title>Hepcidin and iron homeostasis.</title>
        <authorList>
            <person name="Ganz T."/>
            <person name="Nemeth E."/>
        </authorList>
    </citation>
    <scope>REVIEW</scope>
</reference>
<reference key="11">
    <citation type="journal article" date="2012" name="Cell Metab.">
        <title>Hepcidin-induced endocytosis of ferroportin is dependent on ferroportin ubiquitination.</title>
        <authorList>
            <person name="Qiao B."/>
            <person name="Sugianto P."/>
            <person name="Fung E."/>
            <person name="Del-Castillo-Rueda A."/>
            <person name="Moran-Jimenez M.J."/>
            <person name="Ganz T."/>
            <person name="Nemeth E."/>
        </authorList>
    </citation>
    <scope>FUNCTION</scope>
    <scope>INTERACTION WITH SLC40A1</scope>
</reference>
<reference key="12">
    <citation type="journal article" date="2018" name="Blood">
        <title>Structure-function analysis of ferroportin defines the binding site and an alternative mechanism of action of hepcidin.</title>
        <authorList>
            <person name="Aschemeyer S."/>
            <person name="Qiao B."/>
            <person name="Stefanova D."/>
            <person name="Valore E.V."/>
            <person name="Sek A.C."/>
            <person name="Ruwe T.A."/>
            <person name="Vieth K.R."/>
            <person name="Jung G."/>
            <person name="Casu C."/>
            <person name="Rivella S."/>
            <person name="Jormakka M."/>
            <person name="Mackenzie B."/>
            <person name="Ganz T."/>
            <person name="Nemeth E."/>
        </authorList>
    </citation>
    <scope>FUNCTION</scope>
    <scope>INTERACTION WITH SLC40A1</scope>
</reference>
<reference key="13">
    <citation type="journal article" date="2002" name="J. Biol. Chem.">
        <title>The solution structure of human hepcidin, a peptide hormone with antimicrobial activity that is involved in iron uptake and hereditary hemochromatosis.</title>
        <authorList>
            <person name="Hunter H.N."/>
            <person name="Fulton D.B."/>
            <person name="Ganz T."/>
            <person name="Vogel H.J."/>
        </authorList>
    </citation>
    <scope>STRUCTURE BY NMR OF 60-84</scope>
    <scope>PRELIMINARY DISULFIDE BONDS</scope>
</reference>
<reference key="14">
    <citation type="journal article" date="2009" name="J. Biol. Chem.">
        <title>Hepcidin revisited, disulfide connectivity, dynamics, and structure.</title>
        <authorList>
            <person name="Jordan J.B."/>
            <person name="Poppe L."/>
            <person name="Haniu M."/>
            <person name="Arvedson T."/>
            <person name="Syed R."/>
            <person name="Li V."/>
            <person name="Kohno H."/>
            <person name="Kim H."/>
            <person name="Schnier P.D."/>
            <person name="Harvey T.S."/>
            <person name="Miranda L.P."/>
            <person name="Cheetham J."/>
            <person name="Sasu B.J."/>
        </authorList>
    </citation>
    <scope>X-RAY CRYSTALLOGRAPHY (1.89 ANGSTROMS) OF 60-84</scope>
    <scope>DISULFIDE BONDS</scope>
</reference>
<reference evidence="17" key="15">
    <citation type="journal article" date="2020" name="Nature">
        <title>Structure of hepcidin-bound ferroportin reveals iron homeostatic mechanisms.</title>
        <authorList>
            <person name="Billesbolle C.B."/>
            <person name="Azumaya C.M."/>
            <person name="Kretsch R.C."/>
            <person name="Powers A.S."/>
            <person name="Gonen S."/>
            <person name="Schneider S."/>
            <person name="Arvedson T."/>
            <person name="Dror R.O."/>
            <person name="Cheng Y."/>
            <person name="Manglik A."/>
        </authorList>
    </citation>
    <scope>STRUCTURE BY ELECTRON MICROSCOPY (2.50 ANGSTROMS) OF 60-84</scope>
    <scope>INTERACTION WITH SLC40A1</scope>
</reference>
<reference key="16">
    <citation type="journal article" date="2003" name="Clin. Chem.">
        <title>Identification of new mutations of the HFE, hepcidin, and transferrin receptor 2 genes by denaturing HPLC analysis of individuals with biochemical indications of iron overload.</title>
        <authorList>
            <person name="Biasiotto G."/>
            <person name="Belloli S."/>
            <person name="Ruggeri G."/>
            <person name="Zanella I."/>
            <person name="Gerardi G."/>
            <person name="Corrado M."/>
            <person name="Gobbi E."/>
            <person name="Albertini A."/>
            <person name="Arosio P."/>
        </authorList>
    </citation>
    <scope>VARIANT HFE2B ASP-71</scope>
</reference>
<reference key="17">
    <citation type="journal article" date="2003" name="Hum. Mol. Genet.">
        <title>Digenic inheritance of mutations in HAMP and HFE results in different types of haemochromatosis.</title>
        <authorList>
            <person name="Merryweather-Clarke A.T."/>
            <person name="Cadet E."/>
            <person name="Bomford A."/>
            <person name="Capron D."/>
            <person name="Viprakasit V."/>
            <person name="Miller A."/>
            <person name="McHugh P.J."/>
            <person name="Chapman R.W."/>
            <person name="Pointon J.J."/>
            <person name="Wimhurst V.L."/>
            <person name="Livesey K.J."/>
            <person name="Tanphaichitr V."/>
            <person name="Rochette J."/>
            <person name="Robson K.J."/>
        </authorList>
    </citation>
    <scope>VARIANT HFE2B ASP-71</scope>
</reference>
<reference key="18">
    <citation type="journal article" date="2004" name="Blood">
        <title>Screening hepcidin for mutations in juvenile hemochromatosis: identification of a new mutation (C70R).</title>
        <authorList>
            <person name="Roetto A."/>
            <person name="Daraio F."/>
            <person name="Porporato P."/>
            <person name="Caruso R."/>
            <person name="Cox T.M."/>
            <person name="Cazzola M."/>
            <person name="Gasparini P."/>
            <person name="Piperno A."/>
            <person name="Camaschella C."/>
        </authorList>
    </citation>
    <scope>VARIANT HFE2B ARG-70</scope>
</reference>
<reference key="19">
    <citation type="journal article" date="2004" name="Blood">
        <title>HAMP as a modifier gene that increases the phenotypic expression of the HFE pC282Y homozygous genotype.</title>
        <authorList>
            <person name="Jacolot S."/>
            <person name="Le Gac G."/>
            <person name="Scotet V."/>
            <person name="Quere I."/>
            <person name="Mura C."/>
            <person name="Ferec C."/>
        </authorList>
    </citation>
    <scope>VARIANTS HFE2B GLY-59 AND ASP-71</scope>
</reference>
<reference key="20">
    <citation type="journal article" date="2004" name="Clin. Genet.">
        <title>A homozygous HAMP mutation in a multiply consanguineous family with pseudo-dominant juvenile hemochromatosis.</title>
        <authorList>
            <person name="Delatycki M.B."/>
            <person name="Allen K.J."/>
            <person name="Gow P."/>
            <person name="MacFarlane J."/>
            <person name="Radomski C."/>
            <person name="Thompson J."/>
            <person name="Hayden M.R."/>
            <person name="Goldberg Y.P."/>
            <person name="Samuels M.E."/>
        </authorList>
    </citation>
    <scope>VARIANT HFE2B TYR-78</scope>
</reference>
<proteinExistence type="evidence at protein level"/>
<feature type="signal peptide" evidence="1">
    <location>
        <begin position="1"/>
        <end position="24"/>
    </location>
</feature>
<feature type="propeptide" id="PRO_0000013378">
    <location>
        <begin position="25"/>
        <end position="54"/>
    </location>
</feature>
<feature type="peptide" id="PRO_0000013379" description="Hepcidin-25">
    <location>
        <begin position="60"/>
        <end position="84"/>
    </location>
</feature>
<feature type="peptide" id="PRO_0000013380" description="Hepcidin-20">
    <location>
        <begin position="65"/>
        <end position="84"/>
    </location>
</feature>
<feature type="disulfide bond" evidence="10">
    <location>
        <begin position="66"/>
        <end position="82"/>
    </location>
</feature>
<feature type="disulfide bond" evidence="10">
    <location>
        <begin position="69"/>
        <end position="72"/>
    </location>
</feature>
<feature type="disulfide bond" evidence="10">
    <location>
        <begin position="70"/>
        <end position="78"/>
    </location>
</feature>
<feature type="disulfide bond" evidence="10">
    <location>
        <begin position="73"/>
        <end position="81"/>
    </location>
</feature>
<feature type="sequence variant" id="VAR_042512" description="In HFE2B; dbSNP:rs779021719." evidence="7">
    <original>R</original>
    <variation>G</variation>
    <location>
        <position position="59"/>
    </location>
</feature>
<feature type="sequence variant" id="VAR_042513" description="In HFE2B; dbSNP:rs1374259518." evidence="5">
    <original>C</original>
    <variation>R</variation>
    <location>
        <position position="70"/>
    </location>
</feature>
<feature type="sequence variant" id="VAR_026648" description="In HFE2B; dbSNP:rs104894696." evidence="4 6 7">
    <original>G</original>
    <variation>D</variation>
    <location>
        <position position="71"/>
    </location>
</feature>
<feature type="sequence variant" id="VAR_042514" description="In HFE2B; dbSNP:rs1462013476." evidence="8">
    <original>C</original>
    <variation>Y</variation>
    <location>
        <position position="78"/>
    </location>
</feature>
<feature type="sequence conflict" description="In Ref. 3; AAK14912." evidence="15" ref="3">
    <original>T</original>
    <variation>M</variation>
    <location>
        <position position="31"/>
    </location>
</feature>
<feature type="strand" evidence="18">
    <location>
        <begin position="66"/>
        <end position="71"/>
    </location>
</feature>
<feature type="strand" evidence="18">
    <location>
        <begin position="76"/>
        <end position="82"/>
    </location>
</feature>
<accession>P81172</accession>
<accession>Q1HE14</accession>
<accession>Q9BY68</accession>
<dbReference type="EMBL" id="AF309489">
    <property type="protein sequence ID" value="AAG23966.1"/>
    <property type="molecule type" value="mRNA"/>
</dbReference>
<dbReference type="EMBL" id="AJ277280">
    <property type="protein sequence ID" value="CAC09419.1"/>
    <property type="molecule type" value="mRNA"/>
</dbReference>
<dbReference type="EMBL" id="AF131292">
    <property type="protein sequence ID" value="AAK14912.1"/>
    <property type="molecule type" value="mRNA"/>
</dbReference>
<dbReference type="EMBL" id="AY358669">
    <property type="protein sequence ID" value="AAQ89032.1"/>
    <property type="molecule type" value="mRNA"/>
</dbReference>
<dbReference type="EMBL" id="DQ496109">
    <property type="protein sequence ID" value="ABF47098.1"/>
    <property type="molecule type" value="Genomic_DNA"/>
</dbReference>
<dbReference type="EMBL" id="AD000684">
    <property type="status" value="NOT_ANNOTATED_CDS"/>
    <property type="molecule type" value="Genomic_DNA"/>
</dbReference>
<dbReference type="EMBL" id="BC020612">
    <property type="protein sequence ID" value="AAH20612.1"/>
    <property type="molecule type" value="mRNA"/>
</dbReference>
<dbReference type="CCDS" id="CCDS12454.1"/>
<dbReference type="RefSeq" id="NP_066998.1">
    <property type="nucleotide sequence ID" value="NM_021175.4"/>
</dbReference>
<dbReference type="PDB" id="1M4E">
    <property type="method" value="NMR"/>
    <property type="chains" value="A=65-84"/>
</dbReference>
<dbReference type="PDB" id="1M4F">
    <property type="method" value="NMR"/>
    <property type="chains" value="A=60-84"/>
</dbReference>
<dbReference type="PDB" id="2KEF">
    <property type="method" value="NMR"/>
    <property type="chains" value="A=60-84"/>
</dbReference>
<dbReference type="PDB" id="3H0T">
    <property type="method" value="X-ray"/>
    <property type="resolution" value="1.89 A"/>
    <property type="chains" value="C=60-84"/>
</dbReference>
<dbReference type="PDB" id="4QAE">
    <property type="method" value="X-ray"/>
    <property type="resolution" value="2.10 A"/>
    <property type="chains" value="P/Q/R/S/T/U=60-84"/>
</dbReference>
<dbReference type="PDB" id="6WBV">
    <property type="method" value="EM"/>
    <property type="resolution" value="2.50 A"/>
    <property type="chains" value="B=60-84"/>
</dbReference>
<dbReference type="PDBsum" id="1M4E"/>
<dbReference type="PDBsum" id="1M4F"/>
<dbReference type="PDBsum" id="2KEF"/>
<dbReference type="PDBsum" id="3H0T"/>
<dbReference type="PDBsum" id="4QAE"/>
<dbReference type="PDBsum" id="6WBV"/>
<dbReference type="EMDB" id="EMD-21599"/>
<dbReference type="SMR" id="P81172"/>
<dbReference type="BioGRID" id="121776">
    <property type="interactions" value="3"/>
</dbReference>
<dbReference type="FunCoup" id="P81172">
    <property type="interactions" value="282"/>
</dbReference>
<dbReference type="IntAct" id="P81172">
    <property type="interactions" value="2"/>
</dbReference>
<dbReference type="STRING" id="9606.ENSP00000471894"/>
<dbReference type="BindingDB" id="P81172"/>
<dbReference type="ChEMBL" id="CHEMBL3989381"/>
<dbReference type="DrugBank" id="DB13257">
    <property type="generic name" value="Ferrous sulfate anhydrous"/>
</dbReference>
<dbReference type="TCDB" id="8.A.37.1.2">
    <property type="family name" value="the hepcidin (hepcidin) family"/>
</dbReference>
<dbReference type="PhosphoSitePlus" id="P81172"/>
<dbReference type="BioMuta" id="HAMP"/>
<dbReference type="DMDM" id="10720397"/>
<dbReference type="MassIVE" id="P81172"/>
<dbReference type="PaxDb" id="9606-ENSP00000471894"/>
<dbReference type="PeptideAtlas" id="P81172"/>
<dbReference type="ProteomicsDB" id="57692"/>
<dbReference type="ABCD" id="P81172">
    <property type="antibodies" value="4 sequenced antibodies"/>
</dbReference>
<dbReference type="Antibodypedia" id="29325">
    <property type="antibodies" value="442 antibodies from 32 providers"/>
</dbReference>
<dbReference type="DNASU" id="57817"/>
<dbReference type="Ensembl" id="ENST00000222304.5">
    <property type="protein sequence ID" value="ENSP00000222304.2"/>
    <property type="gene ID" value="ENSG00000105697.9"/>
</dbReference>
<dbReference type="Ensembl" id="ENST00000598398.5">
    <property type="protein sequence ID" value="ENSP00000471894.1"/>
    <property type="gene ID" value="ENSG00000105697.9"/>
</dbReference>
<dbReference type="GeneID" id="57817"/>
<dbReference type="KEGG" id="hsa:57817"/>
<dbReference type="MANE-Select" id="ENST00000222304.5">
    <property type="protein sequence ID" value="ENSP00000222304.2"/>
    <property type="RefSeq nucleotide sequence ID" value="NM_021175.4"/>
    <property type="RefSeq protein sequence ID" value="NP_066998.1"/>
</dbReference>
<dbReference type="UCSC" id="uc002nyw.4">
    <property type="organism name" value="human"/>
</dbReference>
<dbReference type="AGR" id="HGNC:15598"/>
<dbReference type="CTD" id="57817"/>
<dbReference type="DisGeNET" id="57817"/>
<dbReference type="GeneCards" id="HAMP"/>
<dbReference type="GeneReviews" id="HAMP"/>
<dbReference type="HGNC" id="HGNC:15598">
    <property type="gene designation" value="HAMP"/>
</dbReference>
<dbReference type="HPA" id="ENSG00000105697">
    <property type="expression patterns" value="Tissue enriched (liver)"/>
</dbReference>
<dbReference type="MalaCards" id="HAMP"/>
<dbReference type="MIM" id="606464">
    <property type="type" value="gene"/>
</dbReference>
<dbReference type="MIM" id="613313">
    <property type="type" value="phenotype"/>
</dbReference>
<dbReference type="neXtProt" id="NX_P81172"/>
<dbReference type="OpenTargets" id="ENSG00000105697"/>
<dbReference type="Orphanet" id="648581">
    <property type="disease" value="Digenic hemochromatosis"/>
</dbReference>
<dbReference type="Orphanet" id="79230">
    <property type="disease" value="HJV or HAMP-related hemochromatosis"/>
</dbReference>
<dbReference type="PharmGKB" id="PA29182"/>
<dbReference type="VEuPathDB" id="HostDB:ENSG00000105697"/>
<dbReference type="eggNOG" id="ENOG502T0FU">
    <property type="taxonomic scope" value="Eukaryota"/>
</dbReference>
<dbReference type="GeneTree" id="ENSGT00390000003154"/>
<dbReference type="HOGENOM" id="CLU_2557737_0_0_1"/>
<dbReference type="InParanoid" id="P81172"/>
<dbReference type="OMA" id="PICLFCC"/>
<dbReference type="OrthoDB" id="9428792at2759"/>
<dbReference type="PAN-GO" id="P81172">
    <property type="GO annotations" value="4 GO annotations based on evolutionary models"/>
</dbReference>
<dbReference type="PhylomeDB" id="P81172"/>
<dbReference type="TreeFam" id="TF330932"/>
<dbReference type="PathwayCommons" id="P81172"/>
<dbReference type="SignaLink" id="P81172"/>
<dbReference type="SIGNOR" id="P81172"/>
<dbReference type="BioGRID-ORCS" id="57817">
    <property type="hits" value="318 hits in 1153 CRISPR screens"/>
</dbReference>
<dbReference type="EvolutionaryTrace" id="P81172"/>
<dbReference type="GeneWiki" id="HAMP"/>
<dbReference type="GenomeRNAi" id="57817"/>
<dbReference type="Pharos" id="P81172">
    <property type="development level" value="Tbio"/>
</dbReference>
<dbReference type="PRO" id="PR:P81172"/>
<dbReference type="Proteomes" id="UP000005640">
    <property type="component" value="Chromosome 19"/>
</dbReference>
<dbReference type="RNAct" id="P81172">
    <property type="molecule type" value="protein"/>
</dbReference>
<dbReference type="Bgee" id="ENSG00000105697">
    <property type="expression patterns" value="Expressed in right lobe of liver and 164 other cell types or tissues"/>
</dbReference>
<dbReference type="GO" id="GO:0005576">
    <property type="term" value="C:extracellular region"/>
    <property type="evidence" value="ECO:0000303"/>
    <property type="project" value="UniProtKB"/>
</dbReference>
<dbReference type="GO" id="GO:0005615">
    <property type="term" value="C:extracellular space"/>
    <property type="evidence" value="ECO:0000314"/>
    <property type="project" value="UniProt"/>
</dbReference>
<dbReference type="GO" id="GO:0005179">
    <property type="term" value="F:hormone activity"/>
    <property type="evidence" value="ECO:0000314"/>
    <property type="project" value="UniProtKB"/>
</dbReference>
<dbReference type="GO" id="GO:0141108">
    <property type="term" value="F:transporter regulator activity"/>
    <property type="evidence" value="ECO:0000314"/>
    <property type="project" value="UniProt"/>
</dbReference>
<dbReference type="GO" id="GO:0042742">
    <property type="term" value="P:defense response to bacterium"/>
    <property type="evidence" value="ECO:0000318"/>
    <property type="project" value="GO_Central"/>
</dbReference>
<dbReference type="GO" id="GO:0050832">
    <property type="term" value="P:defense response to fungus"/>
    <property type="evidence" value="ECO:0007669"/>
    <property type="project" value="UniProtKB-KW"/>
</dbReference>
<dbReference type="GO" id="GO:0006955">
    <property type="term" value="P:immune response"/>
    <property type="evidence" value="ECO:0000304"/>
    <property type="project" value="UniProtKB"/>
</dbReference>
<dbReference type="GO" id="GO:0006879">
    <property type="term" value="P:intracellular iron ion homeostasis"/>
    <property type="evidence" value="ECO:0000314"/>
    <property type="project" value="CACAO"/>
</dbReference>
<dbReference type="GO" id="GO:0031640">
    <property type="term" value="P:killing of cells of another organism"/>
    <property type="evidence" value="ECO:0007669"/>
    <property type="project" value="UniProtKB-KW"/>
</dbReference>
<dbReference type="GO" id="GO:0060586">
    <property type="term" value="P:multicellular organismal-level iron ion homeostasis"/>
    <property type="evidence" value="ECO:0000315"/>
    <property type="project" value="BHF-UCL"/>
</dbReference>
<dbReference type="GO" id="GO:1904479">
    <property type="term" value="P:negative regulation of intestinal absorption"/>
    <property type="evidence" value="ECO:0000315"/>
    <property type="project" value="BHF-UCL"/>
</dbReference>
<dbReference type="GO" id="GO:1904039">
    <property type="term" value="P:negative regulation of iron export across plasma membrane"/>
    <property type="evidence" value="ECO:0000314"/>
    <property type="project" value="UniProtKB"/>
</dbReference>
<dbReference type="GO" id="GO:0034760">
    <property type="term" value="P:negative regulation of iron ion transmembrane transport"/>
    <property type="evidence" value="ECO:0000318"/>
    <property type="project" value="GO_Central"/>
</dbReference>
<dbReference type="GO" id="GO:0000122">
    <property type="term" value="P:negative regulation of transcription by RNA polymerase II"/>
    <property type="evidence" value="ECO:0000250"/>
    <property type="project" value="BHF-UCL"/>
</dbReference>
<dbReference type="GO" id="GO:0032436">
    <property type="term" value="P:positive regulation of proteasomal ubiquitin-dependent protein catabolic process"/>
    <property type="evidence" value="ECO:0000314"/>
    <property type="project" value="UniProtKB"/>
</dbReference>
<dbReference type="GO" id="GO:0010039">
    <property type="term" value="P:response to iron ion"/>
    <property type="evidence" value="ECO:0000315"/>
    <property type="project" value="BHF-UCL"/>
</dbReference>
<dbReference type="InterPro" id="IPR010500">
    <property type="entry name" value="Hepcidin"/>
</dbReference>
<dbReference type="PANTHER" id="PTHR16877">
    <property type="entry name" value="HEPCIDIN"/>
    <property type="match status" value="1"/>
</dbReference>
<dbReference type="PANTHER" id="PTHR16877:SF0">
    <property type="entry name" value="HEPCIDIN"/>
    <property type="match status" value="1"/>
</dbReference>
<dbReference type="Pfam" id="PF06446">
    <property type="entry name" value="Hepcidin"/>
    <property type="match status" value="1"/>
</dbReference>
<gene>
    <name evidence="16" type="primary">HAMP</name>
    <name type="synonym">HEPC</name>
    <name type="synonym">LEAP1</name>
    <name type="ORF">UNQ487/PRO1003</name>
</gene>
<name>HEPC_HUMAN</name>
<comment type="function">
    <text evidence="11 12 13 14">Liver-produced hormone that constitutes the main circulating regulator of iron absorption and distribution across tissues. Acts by promoting endocytosis and degradation of ferroportin/SLC40A1, leading to the retention of iron in iron-exporting cells and decreased flow of iron into plasma (PubMed:22682227, PubMed:29237594, PubMed:32814342). Controls the major flows of iron into plasma: absorption of dietary iron in the intestine, recycling of iron by macrophages, which phagocytose old erythrocytes and other cells, and mobilization of stored iron from hepatocytes (PubMed:22306005).</text>
</comment>
<comment type="function">
    <text evidence="2 3">Has strong antimicrobial activity against E.coli ML35P N.cinerea and weaker against S.epidermidis, S.aureus and group b streptococcus bacteria. Active against the fungus C.albicans. No activity against P.aeruginosa (PubMed:11034317, PubMed:11113131).</text>
</comment>
<comment type="subunit">
    <text evidence="12 13 14">Interacts with SLC40A1; this interaction promotes SLC40A1 rapid ubiquitination.</text>
</comment>
<comment type="subcellular location">
    <subcellularLocation>
        <location evidence="2">Secreted</location>
    </subcellularLocation>
</comment>
<comment type="tissue specificity">
    <text evidence="2 9">Highest expression in liver and to a lesser extent in heart and brain. Low levels in lung, tonsils, salivary gland, trachea, prostate gland, adrenal gland and thyroid gland. Secreted into the urine and blood (PubMed:11034317). Expressed by hepatocytes (PubMed:15124018).</text>
</comment>
<comment type="induction">
    <text evidence="9">Expression in hepatocytes is induced by LPS stimulus and the induction is mediated by IL6 (PubMed:15124018). Expression is inhibited in presence of TNF (PubMed:15124018).</text>
</comment>
<comment type="mass spectrometry">
    <molecule>Hepcidin-25</molecule>
</comment>
<comment type="disease" evidence="4 5 6 7 8">
    <disease id="DI-01700">
        <name>Hemochromatosis 2B</name>
        <acronym>HFE2B</acronym>
        <description>A juvenile form of hemochromatosis, a disorder of iron metabolism with excess deposition of iron in a variety of organs leading to their failure, bronze skin pigmentation, hepatic cirrhosis, arthropathy and diabetes. The most common symptoms of juvenile hemochromatosis at presentation are hypogonadism and cardiomyopathy.</description>
        <dbReference type="MIM" id="613313"/>
    </disease>
    <text>The disease is caused by variants affecting the gene represented in this entry.</text>
</comment>
<comment type="similarity">
    <text evidence="15">Belongs to the hepcidin family.</text>
</comment>
<comment type="online information" name="Wikipedia">
    <link uri="https://en.wikipedia.org/wiki/Hepcidin"/>
    <text>Hepcidin entry</text>
</comment>
<evidence type="ECO:0000255" key="1"/>
<evidence type="ECO:0000269" key="2">
    <source>
    </source>
</evidence>
<evidence type="ECO:0000269" key="3">
    <source>
    </source>
</evidence>
<evidence type="ECO:0000269" key="4">
    <source>
    </source>
</evidence>
<evidence type="ECO:0000269" key="5">
    <source>
    </source>
</evidence>
<evidence type="ECO:0000269" key="6">
    <source>
    </source>
</evidence>
<evidence type="ECO:0000269" key="7">
    <source>
    </source>
</evidence>
<evidence type="ECO:0000269" key="8">
    <source>
    </source>
</evidence>
<evidence type="ECO:0000269" key="9">
    <source>
    </source>
</evidence>
<evidence type="ECO:0000269" key="10">
    <source>
    </source>
</evidence>
<evidence type="ECO:0000269" key="11">
    <source>
    </source>
</evidence>
<evidence type="ECO:0000269" key="12">
    <source>
    </source>
</evidence>
<evidence type="ECO:0000269" key="13">
    <source>
    </source>
</evidence>
<evidence type="ECO:0000269" key="14">
    <source>
    </source>
</evidence>
<evidence type="ECO:0000305" key="15"/>
<evidence type="ECO:0000312" key="16">
    <source>
        <dbReference type="HGNC" id="HGNC:15598"/>
    </source>
</evidence>
<evidence type="ECO:0007744" key="17">
    <source>
        <dbReference type="PDB" id="6WBV"/>
    </source>
</evidence>
<evidence type="ECO:0007829" key="18">
    <source>
        <dbReference type="PDB" id="3H0T"/>
    </source>
</evidence>
<protein>
    <recommendedName>
        <fullName evidence="15">Hepcidin</fullName>
    </recommendedName>
    <alternativeName>
        <fullName>Liver-expressed antimicrobial peptide 1</fullName>
        <shortName>LEAP-1</shortName>
    </alternativeName>
    <alternativeName>
        <fullName>Putative liver tumor regressor</fullName>
        <shortName>PLTR</shortName>
    </alternativeName>
    <component>
        <recommendedName>
            <fullName>Hepcidin-25</fullName>
            <shortName>Hepc25</shortName>
        </recommendedName>
    </component>
    <component>
        <recommendedName>
            <fullName>Hepcidin-20</fullName>
            <shortName>Hepc20</shortName>
        </recommendedName>
    </component>
</protein>
<organism>
    <name type="scientific">Homo sapiens</name>
    <name type="common">Human</name>
    <dbReference type="NCBI Taxonomy" id="9606"/>
    <lineage>
        <taxon>Eukaryota</taxon>
        <taxon>Metazoa</taxon>
        <taxon>Chordata</taxon>
        <taxon>Craniata</taxon>
        <taxon>Vertebrata</taxon>
        <taxon>Euteleostomi</taxon>
        <taxon>Mammalia</taxon>
        <taxon>Eutheria</taxon>
        <taxon>Euarchontoglires</taxon>
        <taxon>Primates</taxon>
        <taxon>Haplorrhini</taxon>
        <taxon>Catarrhini</taxon>
        <taxon>Hominidae</taxon>
        <taxon>Homo</taxon>
    </lineage>
</organism>
<keyword id="KW-0002">3D-structure</keyword>
<keyword id="KW-0044">Antibiotic</keyword>
<keyword id="KW-0929">Antimicrobial</keyword>
<keyword id="KW-0165">Cleavage on pair of basic residues</keyword>
<keyword id="KW-0903">Direct protein sequencing</keyword>
<keyword id="KW-0225">Disease variant</keyword>
<keyword id="KW-1015">Disulfide bond</keyword>
<keyword id="KW-0295">Fungicide</keyword>
<keyword id="KW-0372">Hormone</keyword>
<keyword id="KW-1267">Proteomics identification</keyword>
<keyword id="KW-1185">Reference proteome</keyword>
<keyword id="KW-0964">Secreted</keyword>
<keyword id="KW-0732">Signal</keyword>
<sequence>MALSSQIWAACLLLLLLLASLTSGSVFPQQTGQLAELQPQDRAGARASWMPMFQRRRRRDTHFPICIFCCGCCHRSKCGMCCKT</sequence>